<accession>B2HSN0</accession>
<name>RS10_MYCMM</name>
<evidence type="ECO:0000255" key="1">
    <source>
        <dbReference type="HAMAP-Rule" id="MF_00508"/>
    </source>
</evidence>
<evidence type="ECO:0000305" key="2"/>
<gene>
    <name evidence="1" type="primary">rpsJ</name>
    <name type="ordered locus">MMAR_1030</name>
</gene>
<feature type="chain" id="PRO_1000127154" description="Small ribosomal subunit protein uS10">
    <location>
        <begin position="1"/>
        <end position="101"/>
    </location>
</feature>
<sequence>MAGQKIRIRLKAYDHEAIDASARKIVETVVRTGASVVGPVPLPTEKNVYCVIRSPHKYKDSREHFEMRTHKRLIDIIDPTPKTVDALMRIDLPASVDVNIQ</sequence>
<protein>
    <recommendedName>
        <fullName evidence="1">Small ribosomal subunit protein uS10</fullName>
    </recommendedName>
    <alternativeName>
        <fullName evidence="2">30S ribosomal protein S10</fullName>
    </alternativeName>
</protein>
<proteinExistence type="inferred from homology"/>
<comment type="function">
    <text evidence="1">Involved in the binding of tRNA to the ribosomes.</text>
</comment>
<comment type="subunit">
    <text evidence="1">Part of the 30S ribosomal subunit.</text>
</comment>
<comment type="similarity">
    <text evidence="1">Belongs to the universal ribosomal protein uS10 family.</text>
</comment>
<keyword id="KW-1185">Reference proteome</keyword>
<keyword id="KW-0687">Ribonucleoprotein</keyword>
<keyword id="KW-0689">Ribosomal protein</keyword>
<organism>
    <name type="scientific">Mycobacterium marinum (strain ATCC BAA-535 / M)</name>
    <dbReference type="NCBI Taxonomy" id="216594"/>
    <lineage>
        <taxon>Bacteria</taxon>
        <taxon>Bacillati</taxon>
        <taxon>Actinomycetota</taxon>
        <taxon>Actinomycetes</taxon>
        <taxon>Mycobacteriales</taxon>
        <taxon>Mycobacteriaceae</taxon>
        <taxon>Mycobacterium</taxon>
        <taxon>Mycobacterium ulcerans group</taxon>
    </lineage>
</organism>
<dbReference type="EMBL" id="CP000854">
    <property type="protein sequence ID" value="ACC39488.1"/>
    <property type="molecule type" value="Genomic_DNA"/>
</dbReference>
<dbReference type="RefSeq" id="WP_003403578.1">
    <property type="nucleotide sequence ID" value="NC_010612.1"/>
</dbReference>
<dbReference type="SMR" id="B2HSN0"/>
<dbReference type="STRING" id="216594.MMAR_1030"/>
<dbReference type="GeneID" id="93438601"/>
<dbReference type="KEGG" id="mmi:MMAR_1030"/>
<dbReference type="eggNOG" id="COG0051">
    <property type="taxonomic scope" value="Bacteria"/>
</dbReference>
<dbReference type="HOGENOM" id="CLU_122625_1_3_11"/>
<dbReference type="OrthoDB" id="9804464at2"/>
<dbReference type="Proteomes" id="UP000001190">
    <property type="component" value="Chromosome"/>
</dbReference>
<dbReference type="GO" id="GO:1990904">
    <property type="term" value="C:ribonucleoprotein complex"/>
    <property type="evidence" value="ECO:0007669"/>
    <property type="project" value="UniProtKB-KW"/>
</dbReference>
<dbReference type="GO" id="GO:0005840">
    <property type="term" value="C:ribosome"/>
    <property type="evidence" value="ECO:0007669"/>
    <property type="project" value="UniProtKB-KW"/>
</dbReference>
<dbReference type="GO" id="GO:0003735">
    <property type="term" value="F:structural constituent of ribosome"/>
    <property type="evidence" value="ECO:0007669"/>
    <property type="project" value="InterPro"/>
</dbReference>
<dbReference type="GO" id="GO:0000049">
    <property type="term" value="F:tRNA binding"/>
    <property type="evidence" value="ECO:0007669"/>
    <property type="project" value="UniProtKB-UniRule"/>
</dbReference>
<dbReference type="GO" id="GO:0006412">
    <property type="term" value="P:translation"/>
    <property type="evidence" value="ECO:0007669"/>
    <property type="project" value="UniProtKB-UniRule"/>
</dbReference>
<dbReference type="FunFam" id="3.30.70.600:FF:000001">
    <property type="entry name" value="30S ribosomal protein S10"/>
    <property type="match status" value="1"/>
</dbReference>
<dbReference type="Gene3D" id="3.30.70.600">
    <property type="entry name" value="Ribosomal protein S10 domain"/>
    <property type="match status" value="1"/>
</dbReference>
<dbReference type="HAMAP" id="MF_00508">
    <property type="entry name" value="Ribosomal_uS10"/>
    <property type="match status" value="1"/>
</dbReference>
<dbReference type="InterPro" id="IPR001848">
    <property type="entry name" value="Ribosomal_uS10"/>
</dbReference>
<dbReference type="InterPro" id="IPR018268">
    <property type="entry name" value="Ribosomal_uS10_CS"/>
</dbReference>
<dbReference type="InterPro" id="IPR027486">
    <property type="entry name" value="Ribosomal_uS10_dom"/>
</dbReference>
<dbReference type="InterPro" id="IPR036838">
    <property type="entry name" value="Ribosomal_uS10_dom_sf"/>
</dbReference>
<dbReference type="NCBIfam" id="NF001861">
    <property type="entry name" value="PRK00596.1"/>
    <property type="match status" value="1"/>
</dbReference>
<dbReference type="NCBIfam" id="TIGR01049">
    <property type="entry name" value="rpsJ_bact"/>
    <property type="match status" value="1"/>
</dbReference>
<dbReference type="PANTHER" id="PTHR11700">
    <property type="entry name" value="30S RIBOSOMAL PROTEIN S10 FAMILY MEMBER"/>
    <property type="match status" value="1"/>
</dbReference>
<dbReference type="Pfam" id="PF00338">
    <property type="entry name" value="Ribosomal_S10"/>
    <property type="match status" value="1"/>
</dbReference>
<dbReference type="PRINTS" id="PR00971">
    <property type="entry name" value="RIBOSOMALS10"/>
</dbReference>
<dbReference type="SMART" id="SM01403">
    <property type="entry name" value="Ribosomal_S10"/>
    <property type="match status" value="1"/>
</dbReference>
<dbReference type="SUPFAM" id="SSF54999">
    <property type="entry name" value="Ribosomal protein S10"/>
    <property type="match status" value="1"/>
</dbReference>
<dbReference type="PROSITE" id="PS00361">
    <property type="entry name" value="RIBOSOMAL_S10"/>
    <property type="match status" value="1"/>
</dbReference>
<reference key="1">
    <citation type="journal article" date="2008" name="Genome Res.">
        <title>Insights from the complete genome sequence of Mycobacterium marinum on the evolution of Mycobacterium tuberculosis.</title>
        <authorList>
            <person name="Stinear T.P."/>
            <person name="Seemann T."/>
            <person name="Harrison P.F."/>
            <person name="Jenkin G.A."/>
            <person name="Davies J.K."/>
            <person name="Johnson P.D."/>
            <person name="Abdellah Z."/>
            <person name="Arrowsmith C."/>
            <person name="Chillingworth T."/>
            <person name="Churcher C."/>
            <person name="Clarke K."/>
            <person name="Cronin A."/>
            <person name="Davis P."/>
            <person name="Goodhead I."/>
            <person name="Holroyd N."/>
            <person name="Jagels K."/>
            <person name="Lord A."/>
            <person name="Moule S."/>
            <person name="Mungall K."/>
            <person name="Norbertczak H."/>
            <person name="Quail M.A."/>
            <person name="Rabbinowitsch E."/>
            <person name="Walker D."/>
            <person name="White B."/>
            <person name="Whitehead S."/>
            <person name="Small P.L."/>
            <person name="Brosch R."/>
            <person name="Ramakrishnan L."/>
            <person name="Fischbach M.A."/>
            <person name="Parkhill J."/>
            <person name="Cole S.T."/>
        </authorList>
    </citation>
    <scope>NUCLEOTIDE SEQUENCE [LARGE SCALE GENOMIC DNA]</scope>
    <source>
        <strain>ATCC BAA-535 / M</strain>
    </source>
</reference>